<dbReference type="EMBL" id="AF190943">
    <property type="protein sequence ID" value="AAF74539.1"/>
    <property type="molecule type" value="mRNA"/>
</dbReference>
<dbReference type="RefSeq" id="NP_001028061.1">
    <property type="nucleotide sequence ID" value="NM_001032889.1"/>
</dbReference>
<dbReference type="SMR" id="Q9MZJ7"/>
<dbReference type="FunCoup" id="Q9MZJ7">
    <property type="interactions" value="204"/>
</dbReference>
<dbReference type="STRING" id="9544.ENSMMUP00000040216"/>
<dbReference type="GlyCosmos" id="Q9MZJ7">
    <property type="glycosylation" value="4 sites, No reported glycans"/>
</dbReference>
<dbReference type="PaxDb" id="9544-ENSMMUP00000024062"/>
<dbReference type="GeneID" id="574240"/>
<dbReference type="KEGG" id="mcc:574240"/>
<dbReference type="CTD" id="574240"/>
<dbReference type="eggNOG" id="KOG4297">
    <property type="taxonomic scope" value="Eukaryota"/>
</dbReference>
<dbReference type="InParanoid" id="Q9MZJ7"/>
<dbReference type="OrthoDB" id="2142683at2759"/>
<dbReference type="Proteomes" id="UP000006718">
    <property type="component" value="Unassembled WGS sequence"/>
</dbReference>
<dbReference type="GO" id="GO:0009986">
    <property type="term" value="C:cell surface"/>
    <property type="evidence" value="ECO:0000250"/>
    <property type="project" value="UniProtKB"/>
</dbReference>
<dbReference type="GO" id="GO:0009897">
    <property type="term" value="C:external side of plasma membrane"/>
    <property type="evidence" value="ECO:0000318"/>
    <property type="project" value="GO_Central"/>
</dbReference>
<dbReference type="GO" id="GO:0030246">
    <property type="term" value="F:carbohydrate binding"/>
    <property type="evidence" value="ECO:0007669"/>
    <property type="project" value="UniProtKB-KW"/>
</dbReference>
<dbReference type="GO" id="GO:0038023">
    <property type="term" value="F:signaling receptor activity"/>
    <property type="evidence" value="ECO:0000318"/>
    <property type="project" value="GO_Central"/>
</dbReference>
<dbReference type="GO" id="GO:0002250">
    <property type="term" value="P:adaptive immune response"/>
    <property type="evidence" value="ECO:0007669"/>
    <property type="project" value="UniProtKB-KW"/>
</dbReference>
<dbReference type="GO" id="GO:0030154">
    <property type="term" value="P:cell differentiation"/>
    <property type="evidence" value="ECO:0007669"/>
    <property type="project" value="UniProtKB-KW"/>
</dbReference>
<dbReference type="GO" id="GO:0045087">
    <property type="term" value="P:innate immune response"/>
    <property type="evidence" value="ECO:0007669"/>
    <property type="project" value="UniProtKB-KW"/>
</dbReference>
<dbReference type="GO" id="GO:0045954">
    <property type="term" value="P:positive regulation of natural killer cell mediated cytotoxicity"/>
    <property type="evidence" value="ECO:0000250"/>
    <property type="project" value="UniProtKB"/>
</dbReference>
<dbReference type="CDD" id="cd03593">
    <property type="entry name" value="CLECT_NK_receptors_like"/>
    <property type="match status" value="1"/>
</dbReference>
<dbReference type="FunFam" id="3.10.100.10:FF:000055">
    <property type="entry name" value="NKG2-D type II integral membrane protein"/>
    <property type="match status" value="1"/>
</dbReference>
<dbReference type="Gene3D" id="3.10.100.10">
    <property type="entry name" value="Mannose-Binding Protein A, subunit A"/>
    <property type="match status" value="1"/>
</dbReference>
<dbReference type="InterPro" id="IPR001304">
    <property type="entry name" value="C-type_lectin-like"/>
</dbReference>
<dbReference type="InterPro" id="IPR016186">
    <property type="entry name" value="C-type_lectin-like/link_sf"/>
</dbReference>
<dbReference type="InterPro" id="IPR016187">
    <property type="entry name" value="CTDL_fold"/>
</dbReference>
<dbReference type="InterPro" id="IPR042169">
    <property type="entry name" value="NKG2D"/>
</dbReference>
<dbReference type="InterPro" id="IPR033992">
    <property type="entry name" value="NKR-like_CTLD"/>
</dbReference>
<dbReference type="PANTHER" id="PTHR47494">
    <property type="entry name" value="NKG2-D TYPE II INTEGRAL MEMBRANE PROTEIN"/>
    <property type="match status" value="1"/>
</dbReference>
<dbReference type="PANTHER" id="PTHR47494:SF1">
    <property type="entry name" value="NKG2-D TYPE II INTEGRAL MEMBRANE PROTEIN"/>
    <property type="match status" value="1"/>
</dbReference>
<dbReference type="Pfam" id="PF00059">
    <property type="entry name" value="Lectin_C"/>
    <property type="match status" value="1"/>
</dbReference>
<dbReference type="SMART" id="SM00034">
    <property type="entry name" value="CLECT"/>
    <property type="match status" value="1"/>
</dbReference>
<dbReference type="SUPFAM" id="SSF56436">
    <property type="entry name" value="C-type lectin-like"/>
    <property type="match status" value="1"/>
</dbReference>
<dbReference type="PROSITE" id="PS50041">
    <property type="entry name" value="C_TYPE_LECTIN_2"/>
    <property type="match status" value="1"/>
</dbReference>
<reference key="1">
    <citation type="journal article" date="2000" name="Immunogenetics">
        <title>Characterization of rhesus monkey CD94/NKG2 family members and identification of novel transmembrane-deleted forms of NKG2-A, B, C, and D.</title>
        <authorList>
            <person name="LaBonte M.L."/>
            <person name="Levy D.B."/>
            <person name="Letvin N.L."/>
        </authorList>
    </citation>
    <scope>NUCLEOTIDE SEQUENCE [MRNA]</scope>
</reference>
<keyword id="KW-1064">Adaptive immunity</keyword>
<keyword id="KW-1003">Cell membrane</keyword>
<keyword id="KW-0221">Differentiation</keyword>
<keyword id="KW-1015">Disulfide bond</keyword>
<keyword id="KW-0325">Glycoprotein</keyword>
<keyword id="KW-0391">Immunity</keyword>
<keyword id="KW-0399">Innate immunity</keyword>
<keyword id="KW-0430">Lectin</keyword>
<keyword id="KW-0472">Membrane</keyword>
<keyword id="KW-0675">Receptor</keyword>
<keyword id="KW-1185">Reference proteome</keyword>
<keyword id="KW-0735">Signal-anchor</keyword>
<keyword id="KW-0812">Transmembrane</keyword>
<keyword id="KW-1133">Transmembrane helix</keyword>
<proteinExistence type="evidence at transcript level"/>
<sequence length="216" mass="25075">MGWIRGRRPRHNLEMSEFHNYKLGLAKSDFSTRCQKQRCPVIKSKCRENASPLFFCCFIAVAMGIRFIIMVTIWSAVFLNSLFNQEVQIPLTESYCGPCPKNWICYKNNCYQFFNESKNWYESQASCMSQNASLLKVYSKEDQDLLKLVKSYHWMGLVHIPTNGSWQWEDGSILSPNLLTIIEMQKGDCALYASSFKGYIENCSIPNTYICMQRTV</sequence>
<feature type="chain" id="PRO_0000046667" description="NKG2-D type II integral membrane protein">
    <location>
        <begin position="1"/>
        <end position="216"/>
    </location>
</feature>
<feature type="topological domain" description="Cytoplasmic" evidence="3">
    <location>
        <begin position="1"/>
        <end position="51"/>
    </location>
</feature>
<feature type="transmembrane region" description="Helical; Signal-anchor for type II membrane protein" evidence="3">
    <location>
        <begin position="52"/>
        <end position="72"/>
    </location>
</feature>
<feature type="topological domain" description="Extracellular" evidence="3">
    <location>
        <begin position="73"/>
        <end position="216"/>
    </location>
</feature>
<feature type="domain" description="C-type lectin" evidence="4">
    <location>
        <begin position="98"/>
        <end position="213"/>
    </location>
</feature>
<feature type="glycosylation site" description="N-linked (GlcNAc...) asparagine" evidence="3">
    <location>
        <position position="115"/>
    </location>
</feature>
<feature type="glycosylation site" description="N-linked (GlcNAc...) asparagine" evidence="3">
    <location>
        <position position="131"/>
    </location>
</feature>
<feature type="glycosylation site" description="N-linked (GlcNAc...) asparagine" evidence="3">
    <location>
        <position position="163"/>
    </location>
</feature>
<feature type="glycosylation site" description="N-linked (GlcNAc...) asparagine" evidence="3">
    <location>
        <position position="202"/>
    </location>
</feature>
<feature type="disulfide bond" evidence="4">
    <location>
        <begin position="96"/>
        <end position="105"/>
    </location>
</feature>
<feature type="disulfide bond" evidence="4">
    <location>
        <begin position="99"/>
        <end position="110"/>
    </location>
</feature>
<feature type="disulfide bond" evidence="4">
    <location>
        <begin position="127"/>
        <end position="211"/>
    </location>
</feature>
<feature type="disulfide bond" evidence="4">
    <location>
        <begin position="189"/>
        <end position="203"/>
    </location>
</feature>
<gene>
    <name type="primary">KLRK1</name>
    <name type="synonym">NKG2D</name>
</gene>
<organism>
    <name type="scientific">Macaca mulatta</name>
    <name type="common">Rhesus macaque</name>
    <dbReference type="NCBI Taxonomy" id="9544"/>
    <lineage>
        <taxon>Eukaryota</taxon>
        <taxon>Metazoa</taxon>
        <taxon>Chordata</taxon>
        <taxon>Craniata</taxon>
        <taxon>Vertebrata</taxon>
        <taxon>Euteleostomi</taxon>
        <taxon>Mammalia</taxon>
        <taxon>Eutheria</taxon>
        <taxon>Euarchontoglires</taxon>
        <taxon>Primates</taxon>
        <taxon>Haplorrhini</taxon>
        <taxon>Catarrhini</taxon>
        <taxon>Cercopithecidae</taxon>
        <taxon>Cercopithecinae</taxon>
        <taxon>Macaca</taxon>
    </lineage>
</organism>
<name>NKG2D_MACMU</name>
<accession>Q9MZJ7</accession>
<protein>
    <recommendedName>
        <fullName>NKG2-D type II integral membrane protein</fullName>
    </recommendedName>
    <alternativeName>
        <fullName>Killer cell lectin-like receptor subfamily K member 1</fullName>
    </alternativeName>
    <alternativeName>
        <fullName>NK cell receptor D</fullName>
    </alternativeName>
    <alternativeName>
        <fullName>NKG2-D-activating NK receptor</fullName>
    </alternativeName>
    <cdAntigenName>CD314</cdAntigenName>
</protein>
<evidence type="ECO:0000250" key="1"/>
<evidence type="ECO:0000250" key="2">
    <source>
        <dbReference type="UniProtKB" id="P26718"/>
    </source>
</evidence>
<evidence type="ECO:0000255" key="3"/>
<evidence type="ECO:0000255" key="4">
    <source>
        <dbReference type="PROSITE-ProRule" id="PRU00040"/>
    </source>
</evidence>
<comment type="function">
    <text evidence="1">Functions as an activating and costimulatory receptor involved in immunosurveillance upon binding to various cellular stress-inducible ligands displayed at the surface of autologous tumor cells and virus-infected cells. Provides both stimulatory and costimulatory innate immune responses on activated killer (NK) cells, leading to cytotoxic activity. Acts as a costimulatory receptor for T-cell receptor (TCR) in CD8(+) T-cell-mediated adaptive immune responses by amplifying T-cell activation. Stimulates perforin-mediated elimination of ligand-expressing tumor cells. Signaling involves calcium influx, culminating in the expression of TNF-alpha. Participates in NK cell-mediated bone marrow graft rejection. May play a regulatory role in differentiation and survival of NK cells. Binds to ligands belonging to various subfamilies of MHC class I-related glycoproteins (By similarity).</text>
</comment>
<comment type="subunit">
    <text evidence="1 2">Homodimer; disulfide-linked. Heterohexamer composed of two subunits of KLRK1 and four subunits of HCST/DAP10. Interacts (via transmembrane domain) with HCST/DAP10 (via transmembrane domain); the interaction is required for KLRK1 NK cell surface and induces NK cell-mediated cytotoxicity. Can form disulfide-bonded heterodimer with CD94 (By similarity). Interacts with CEACAM1; recruits PTPN6 that dephosphorylates VAV1 (By similarity).</text>
</comment>
<comment type="subcellular location">
    <subcellularLocation>
        <location evidence="1">Cell membrane</location>
        <topology evidence="1">Single-pass type II membrane protein</topology>
    </subcellularLocation>
    <text evidence="1">Colocalized with HCST on the cell surface.</text>
</comment>
<comment type="tissue specificity">
    <text>Natural killer cells.</text>
</comment>
<comment type="miscellaneous">
    <text evidence="1">Is not capable of signal transduction by itself, but operates through the adapter protein HCST.</text>
</comment>